<organism>
    <name type="scientific">Cryptococcus neoformans var. neoformans serotype D (strain B-3501A)</name>
    <name type="common">Filobasidiella neoformans</name>
    <dbReference type="NCBI Taxonomy" id="283643"/>
    <lineage>
        <taxon>Eukaryota</taxon>
        <taxon>Fungi</taxon>
        <taxon>Dikarya</taxon>
        <taxon>Basidiomycota</taxon>
        <taxon>Agaricomycotina</taxon>
        <taxon>Tremellomycetes</taxon>
        <taxon>Tremellales</taxon>
        <taxon>Cryptococcaceae</taxon>
        <taxon>Cryptococcus</taxon>
        <taxon>Cryptococcus neoformans species complex</taxon>
    </lineage>
</organism>
<accession>P0CO41</accession>
<accession>Q55NZ6</accession>
<accession>Q5KEG2</accession>
<dbReference type="EC" id="1.14.11.27" evidence="2"/>
<dbReference type="EMBL" id="AAEY01000039">
    <property type="protein sequence ID" value="EAL19469.1"/>
    <property type="molecule type" value="Genomic_DNA"/>
</dbReference>
<dbReference type="RefSeq" id="XP_774116.1">
    <property type="nucleotide sequence ID" value="XM_769023.1"/>
</dbReference>
<dbReference type="SMR" id="P0CO41"/>
<dbReference type="GeneID" id="4937452"/>
<dbReference type="KEGG" id="cnb:CNBG4160"/>
<dbReference type="VEuPathDB" id="FungiDB:CNBG4160"/>
<dbReference type="HOGENOM" id="CLU_003540_6_1_1"/>
<dbReference type="OrthoDB" id="8311at5206"/>
<dbReference type="GO" id="GO:0005634">
    <property type="term" value="C:nucleus"/>
    <property type="evidence" value="ECO:0007669"/>
    <property type="project" value="UniProtKB-SubCell"/>
</dbReference>
<dbReference type="GO" id="GO:0140680">
    <property type="term" value="F:histone H3K36me/H3K36me2 demethylase activity"/>
    <property type="evidence" value="ECO:0007669"/>
    <property type="project" value="UniProtKB-EC"/>
</dbReference>
<dbReference type="GO" id="GO:0008270">
    <property type="term" value="F:zinc ion binding"/>
    <property type="evidence" value="ECO:0007669"/>
    <property type="project" value="UniProtKB-KW"/>
</dbReference>
<dbReference type="Gene3D" id="2.60.120.650">
    <property type="entry name" value="Cupin"/>
    <property type="match status" value="1"/>
</dbReference>
<dbReference type="Gene3D" id="3.30.40.10">
    <property type="entry name" value="Zinc/RING finger domain, C3HC4 (zinc finger)"/>
    <property type="match status" value="1"/>
</dbReference>
<dbReference type="InterPro" id="IPR041070">
    <property type="entry name" value="JHD"/>
</dbReference>
<dbReference type="InterPro" id="IPR050690">
    <property type="entry name" value="JHDM1_Histone_Demethylase"/>
</dbReference>
<dbReference type="InterPro" id="IPR003347">
    <property type="entry name" value="JmjC_dom"/>
</dbReference>
<dbReference type="InterPro" id="IPR019786">
    <property type="entry name" value="Zinc_finger_PHD-type_CS"/>
</dbReference>
<dbReference type="InterPro" id="IPR011011">
    <property type="entry name" value="Znf_FYVE_PHD"/>
</dbReference>
<dbReference type="InterPro" id="IPR001965">
    <property type="entry name" value="Znf_PHD"/>
</dbReference>
<dbReference type="InterPro" id="IPR013083">
    <property type="entry name" value="Znf_RING/FYVE/PHD"/>
</dbReference>
<dbReference type="PANTHER" id="PTHR23123">
    <property type="entry name" value="PHD/F-BOX CONTAINING PROTEIN"/>
    <property type="match status" value="1"/>
</dbReference>
<dbReference type="Pfam" id="PF17811">
    <property type="entry name" value="JHD"/>
    <property type="match status" value="1"/>
</dbReference>
<dbReference type="Pfam" id="PF02373">
    <property type="entry name" value="JmjC"/>
    <property type="match status" value="1"/>
</dbReference>
<dbReference type="SMART" id="SM00558">
    <property type="entry name" value="JmjC"/>
    <property type="match status" value="1"/>
</dbReference>
<dbReference type="SMART" id="SM00249">
    <property type="entry name" value="PHD"/>
    <property type="match status" value="1"/>
</dbReference>
<dbReference type="SUPFAM" id="SSF51197">
    <property type="entry name" value="Clavaminate synthase-like"/>
    <property type="match status" value="1"/>
</dbReference>
<dbReference type="SUPFAM" id="SSF57903">
    <property type="entry name" value="FYVE/PHD zinc finger"/>
    <property type="match status" value="1"/>
</dbReference>
<dbReference type="PROSITE" id="PS51184">
    <property type="entry name" value="JMJC"/>
    <property type="match status" value="1"/>
</dbReference>
<dbReference type="PROSITE" id="PS01359">
    <property type="entry name" value="ZF_PHD_1"/>
    <property type="match status" value="1"/>
</dbReference>
<proteinExistence type="inferred from homology"/>
<keyword id="KW-0156">Chromatin regulator</keyword>
<keyword id="KW-0223">Dioxygenase</keyword>
<keyword id="KW-0408">Iron</keyword>
<keyword id="KW-0479">Metal-binding</keyword>
<keyword id="KW-0539">Nucleus</keyword>
<keyword id="KW-0560">Oxidoreductase</keyword>
<keyword id="KW-0804">Transcription</keyword>
<keyword id="KW-0805">Transcription regulation</keyword>
<keyword id="KW-0862">Zinc</keyword>
<keyword id="KW-0863">Zinc-finger</keyword>
<evidence type="ECO:0000250" key="1"/>
<evidence type="ECO:0000250" key="2">
    <source>
        <dbReference type="UniProtKB" id="P40034"/>
    </source>
</evidence>
<evidence type="ECO:0000255" key="3">
    <source>
        <dbReference type="PROSITE-ProRule" id="PRU00538"/>
    </source>
</evidence>
<evidence type="ECO:0000256" key="4">
    <source>
        <dbReference type="SAM" id="MobiDB-lite"/>
    </source>
</evidence>
<evidence type="ECO:0000305" key="5"/>
<feature type="chain" id="PRO_0000410125" description="JmjC domain-containing histone demethylation protein 1">
    <location>
        <begin position="1"/>
        <end position="879"/>
    </location>
</feature>
<feature type="domain" description="JmjC" evidence="3">
    <location>
        <begin position="416"/>
        <end position="598"/>
    </location>
</feature>
<feature type="zinc finger region" description="PHD-type">
    <location>
        <begin position="23"/>
        <end position="116"/>
    </location>
</feature>
<feature type="region of interest" description="Disordered" evidence="4">
    <location>
        <begin position="1"/>
        <end position="45"/>
    </location>
</feature>
<feature type="region of interest" description="Disordered" evidence="4">
    <location>
        <begin position="117"/>
        <end position="212"/>
    </location>
</feature>
<feature type="region of interest" description="Disordered" evidence="4">
    <location>
        <begin position="407"/>
        <end position="449"/>
    </location>
</feature>
<feature type="region of interest" description="Disordered" evidence="4">
    <location>
        <begin position="763"/>
        <end position="879"/>
    </location>
</feature>
<feature type="compositionally biased region" description="Basic and acidic residues" evidence="4">
    <location>
        <begin position="183"/>
        <end position="192"/>
    </location>
</feature>
<feature type="compositionally biased region" description="Basic and acidic residues" evidence="4">
    <location>
        <begin position="407"/>
        <end position="433"/>
    </location>
</feature>
<feature type="compositionally biased region" description="Polar residues" evidence="4">
    <location>
        <begin position="769"/>
        <end position="782"/>
    </location>
</feature>
<feature type="compositionally biased region" description="Low complexity" evidence="4">
    <location>
        <begin position="786"/>
        <end position="818"/>
    </location>
</feature>
<feature type="compositionally biased region" description="Basic and acidic residues" evidence="4">
    <location>
        <begin position="848"/>
        <end position="864"/>
    </location>
</feature>
<feature type="binding site" evidence="1">
    <location>
        <position position="472"/>
    </location>
    <ligand>
        <name>substrate</name>
    </ligand>
</feature>
<feature type="binding site" evidence="3">
    <location>
        <position position="475"/>
    </location>
    <ligand>
        <name>Fe cation</name>
        <dbReference type="ChEBI" id="CHEBI:24875"/>
        <note>catalytic</note>
    </ligand>
</feature>
<feature type="binding site" evidence="3">
    <location>
        <position position="477"/>
    </location>
    <ligand>
        <name>Fe cation</name>
        <dbReference type="ChEBI" id="CHEBI:24875"/>
        <note>catalytic</note>
    </ligand>
</feature>
<feature type="binding site" evidence="1">
    <location>
        <position position="492"/>
    </location>
    <ligand>
        <name>substrate</name>
    </ligand>
</feature>
<feature type="binding site" evidence="3">
    <location>
        <position position="566"/>
    </location>
    <ligand>
        <name>Fe cation</name>
        <dbReference type="ChEBI" id="CHEBI:24875"/>
        <note>catalytic</note>
    </ligand>
</feature>
<name>JHD1_CRYNB</name>
<protein>
    <recommendedName>
        <fullName>JmjC domain-containing histone demethylation protein 1</fullName>
        <ecNumber evidence="2">1.14.11.27</ecNumber>
    </recommendedName>
    <alternativeName>
        <fullName>[Histone-H3]-lysine-36 demethylase 1</fullName>
    </alternativeName>
</protein>
<sequence>MSEQVGQREAVDSPQATGVKTPPEPCPLCRETGPPQPPSITEEGKTNEDIDFIWVACNKCDEWYHSACLFLGDEKWRGTIPKEIISTVETNFGDEGAWTNWVEWIGKWYCAPCLARSTSPSNPRPPRHPLVATMKRASIQPKDIDQAGKPLKRSASTSAPLLKSNIKRPRTSTKGQETASPEIDMKSEREQQAESTAGTPASDAPQGRPKRKTAQIDYRNLNNSIATPTHQWLELIADPEKYGRTILDANYPALPGKLLTRAWLESQPLPGQPSSISPDLLPTRFWGPDREPLIVRPENGGFSSLGGHLPSKDLTVQDVANLVGPDRMVDVIDVSSQHSSQWTLQKWAEYIQSSSGNTSVRNPKVYNVISLEISGTELAKKVKPPKIVREIDWVDNFWRFSAGAGGKDVKEKGRGNDSRESSEIRKEGSHLTEGDNAGGEIEEDLEGLKEKTNTPYPKVQLYCLMGMKGAWTDWHVDFAASSVYYTIHSGAKVKLSCFVSFFSPGSYHSQVFFFVKPTEQNLKAYAEWSGSYEKQQDTWLGDMVDEVRKVELHAGDTMIIPTGYIHAVYTPMDSIVFGGNFLHSYNVDTQLRLRQIEIDTKVPQRFRFPMFDRLCWYVADKYCSDLRHLRAYRPRATTTPKPPHFRVLQCLSYLANFLVSQTGILEDPEAEDKARKLVHDRIPGDIVKDPEGLAKELKWRVERELGALGLLGEEASGVEAEEFKSNGTANGSVKIKGKEVSRKRDRLSKVFDKKAISRTWDFHPPAWSENRQSPQIETTTVQLPRPSTSSSDAISGSGPGASPGASANGGANENEQAELTTMLVKQTRKRMRELDDGTVIEESQETTFVEKKTVWGPKLDKEKISQPQGKVEEDMDIDH</sequence>
<comment type="function">
    <text evidence="2">Histone demethylase that specifically demethylates 'Lys-36' of histone H3, thereby playing a central role in histone code.</text>
</comment>
<comment type="catalytic activity">
    <reaction evidence="2">
        <text>N(6),N(6)-dimethyl-L-lysyl(36)-[histone H3] + 2 2-oxoglutarate + 2 O2 = L-lysyl(36)-[histone H3] + 2 formaldehyde + 2 succinate + 2 CO2</text>
        <dbReference type="Rhea" id="RHEA:42032"/>
        <dbReference type="Rhea" id="RHEA-COMP:9785"/>
        <dbReference type="Rhea" id="RHEA-COMP:9787"/>
        <dbReference type="ChEBI" id="CHEBI:15379"/>
        <dbReference type="ChEBI" id="CHEBI:16526"/>
        <dbReference type="ChEBI" id="CHEBI:16810"/>
        <dbReference type="ChEBI" id="CHEBI:16842"/>
        <dbReference type="ChEBI" id="CHEBI:29969"/>
        <dbReference type="ChEBI" id="CHEBI:30031"/>
        <dbReference type="ChEBI" id="CHEBI:61976"/>
        <dbReference type="EC" id="1.14.11.27"/>
    </reaction>
</comment>
<comment type="cofactor">
    <cofactor evidence="1">
        <name>Fe(2+)</name>
        <dbReference type="ChEBI" id="CHEBI:29033"/>
    </cofactor>
    <text evidence="1">Binds 1 Fe(2+) ion per subunit.</text>
</comment>
<comment type="subcellular location">
    <subcellularLocation>
        <location evidence="1">Nucleus</location>
    </subcellularLocation>
</comment>
<comment type="domain">
    <text evidence="1">The JmjC domain mediates the demethylation activity.</text>
</comment>
<comment type="similarity">
    <text evidence="5">Belongs to the JHDM1 histone demethylase family.</text>
</comment>
<reference key="1">
    <citation type="journal article" date="2005" name="Science">
        <title>The genome of the basidiomycetous yeast and human pathogen Cryptococcus neoformans.</title>
        <authorList>
            <person name="Loftus B.J."/>
            <person name="Fung E."/>
            <person name="Roncaglia P."/>
            <person name="Rowley D."/>
            <person name="Amedeo P."/>
            <person name="Bruno D."/>
            <person name="Vamathevan J."/>
            <person name="Miranda M."/>
            <person name="Anderson I.J."/>
            <person name="Fraser J.A."/>
            <person name="Allen J.E."/>
            <person name="Bosdet I.E."/>
            <person name="Brent M.R."/>
            <person name="Chiu R."/>
            <person name="Doering T.L."/>
            <person name="Donlin M.J."/>
            <person name="D'Souza C.A."/>
            <person name="Fox D.S."/>
            <person name="Grinberg V."/>
            <person name="Fu J."/>
            <person name="Fukushima M."/>
            <person name="Haas B.J."/>
            <person name="Huang J.C."/>
            <person name="Janbon G."/>
            <person name="Jones S.J.M."/>
            <person name="Koo H.L."/>
            <person name="Krzywinski M.I."/>
            <person name="Kwon-Chung K.J."/>
            <person name="Lengeler K.B."/>
            <person name="Maiti R."/>
            <person name="Marra M.A."/>
            <person name="Marra R.E."/>
            <person name="Mathewson C.A."/>
            <person name="Mitchell T.G."/>
            <person name="Pertea M."/>
            <person name="Riggs F.R."/>
            <person name="Salzberg S.L."/>
            <person name="Schein J.E."/>
            <person name="Shvartsbeyn A."/>
            <person name="Shin H."/>
            <person name="Shumway M."/>
            <person name="Specht C.A."/>
            <person name="Suh B.B."/>
            <person name="Tenney A."/>
            <person name="Utterback T.R."/>
            <person name="Wickes B.L."/>
            <person name="Wortman J.R."/>
            <person name="Wye N.H."/>
            <person name="Kronstad J.W."/>
            <person name="Lodge J.K."/>
            <person name="Heitman J."/>
            <person name="Davis R.W."/>
            <person name="Fraser C.M."/>
            <person name="Hyman R.W."/>
        </authorList>
    </citation>
    <scope>NUCLEOTIDE SEQUENCE [LARGE SCALE GENOMIC DNA]</scope>
    <source>
        <strain>B-3501A</strain>
    </source>
</reference>
<gene>
    <name type="primary">JHD1</name>
    <name type="ordered locus">CNBG4160</name>
</gene>